<reference key="1">
    <citation type="journal article" date="2008" name="J. Bacteriol.">
        <title>The pangenome structure of Escherichia coli: comparative genomic analysis of E. coli commensal and pathogenic isolates.</title>
        <authorList>
            <person name="Rasko D.A."/>
            <person name="Rosovitz M.J."/>
            <person name="Myers G.S.A."/>
            <person name="Mongodin E.F."/>
            <person name="Fricke W.F."/>
            <person name="Gajer P."/>
            <person name="Crabtree J."/>
            <person name="Sebaihia M."/>
            <person name="Thomson N.R."/>
            <person name="Chaudhuri R."/>
            <person name="Henderson I.R."/>
            <person name="Sperandio V."/>
            <person name="Ravel J."/>
        </authorList>
    </citation>
    <scope>NUCLEOTIDE SEQUENCE [LARGE SCALE GENOMIC DNA]</scope>
    <source>
        <strain>HS</strain>
    </source>
</reference>
<comment type="function">
    <text evidence="1">Specifically methylates position 2 of adenine 2503 in 23S rRNA and position 2 of adenine 37 in tRNAs. m2A2503 modification seems to play a crucial role in the proofreading step occurring at the peptidyl transferase center and thus would serve to optimize ribosomal fidelity.</text>
</comment>
<comment type="catalytic activity">
    <reaction evidence="1">
        <text>adenosine(2503) in 23S rRNA + 2 reduced [2Fe-2S]-[ferredoxin] + 2 S-adenosyl-L-methionine = 2-methyladenosine(2503) in 23S rRNA + 5'-deoxyadenosine + L-methionine + 2 oxidized [2Fe-2S]-[ferredoxin] + S-adenosyl-L-homocysteine</text>
        <dbReference type="Rhea" id="RHEA:42916"/>
        <dbReference type="Rhea" id="RHEA-COMP:10000"/>
        <dbReference type="Rhea" id="RHEA-COMP:10001"/>
        <dbReference type="Rhea" id="RHEA-COMP:10152"/>
        <dbReference type="Rhea" id="RHEA-COMP:10282"/>
        <dbReference type="ChEBI" id="CHEBI:17319"/>
        <dbReference type="ChEBI" id="CHEBI:33737"/>
        <dbReference type="ChEBI" id="CHEBI:33738"/>
        <dbReference type="ChEBI" id="CHEBI:57844"/>
        <dbReference type="ChEBI" id="CHEBI:57856"/>
        <dbReference type="ChEBI" id="CHEBI:59789"/>
        <dbReference type="ChEBI" id="CHEBI:74411"/>
        <dbReference type="ChEBI" id="CHEBI:74497"/>
        <dbReference type="EC" id="2.1.1.192"/>
    </reaction>
</comment>
<comment type="catalytic activity">
    <reaction evidence="1">
        <text>adenosine(37) in tRNA + 2 reduced [2Fe-2S]-[ferredoxin] + 2 S-adenosyl-L-methionine = 2-methyladenosine(37) in tRNA + 5'-deoxyadenosine + L-methionine + 2 oxidized [2Fe-2S]-[ferredoxin] + S-adenosyl-L-homocysteine</text>
        <dbReference type="Rhea" id="RHEA:43332"/>
        <dbReference type="Rhea" id="RHEA-COMP:10000"/>
        <dbReference type="Rhea" id="RHEA-COMP:10001"/>
        <dbReference type="Rhea" id="RHEA-COMP:10162"/>
        <dbReference type="Rhea" id="RHEA-COMP:10485"/>
        <dbReference type="ChEBI" id="CHEBI:17319"/>
        <dbReference type="ChEBI" id="CHEBI:33737"/>
        <dbReference type="ChEBI" id="CHEBI:33738"/>
        <dbReference type="ChEBI" id="CHEBI:57844"/>
        <dbReference type="ChEBI" id="CHEBI:57856"/>
        <dbReference type="ChEBI" id="CHEBI:59789"/>
        <dbReference type="ChEBI" id="CHEBI:74411"/>
        <dbReference type="ChEBI" id="CHEBI:74497"/>
        <dbReference type="EC" id="2.1.1.192"/>
    </reaction>
</comment>
<comment type="cofactor">
    <cofactor evidence="1">
        <name>[4Fe-4S] cluster</name>
        <dbReference type="ChEBI" id="CHEBI:49883"/>
    </cofactor>
    <text evidence="1">Binds 1 [4Fe-4S] cluster. The cluster is coordinated with 3 cysteines and an exchangeable S-adenosyl-L-methionine.</text>
</comment>
<comment type="subcellular location">
    <subcellularLocation>
        <location evidence="1">Cytoplasm</location>
    </subcellularLocation>
</comment>
<comment type="miscellaneous">
    <text evidence="1">Reaction proceeds by a ping-pong mechanism involving intermediate methylation of a conserved cysteine residue.</text>
</comment>
<comment type="similarity">
    <text evidence="1">Belongs to the radical SAM superfamily. RlmN family.</text>
</comment>
<protein>
    <recommendedName>
        <fullName evidence="1">Dual-specificity RNA methyltransferase RlmN</fullName>
        <ecNumber evidence="1">2.1.1.192</ecNumber>
    </recommendedName>
    <alternativeName>
        <fullName evidence="1">23S rRNA (adenine(2503)-C(2))-methyltransferase</fullName>
    </alternativeName>
    <alternativeName>
        <fullName evidence="1">23S rRNA m2A2503 methyltransferase</fullName>
    </alternativeName>
    <alternativeName>
        <fullName evidence="1">Ribosomal RNA large subunit methyltransferase N</fullName>
    </alternativeName>
    <alternativeName>
        <fullName evidence="1">tRNA (adenine(37)-C(2))-methyltransferase</fullName>
    </alternativeName>
    <alternativeName>
        <fullName evidence="1">tRNA m2A37 methyltransferase</fullName>
    </alternativeName>
</protein>
<dbReference type="EC" id="2.1.1.192" evidence="1"/>
<dbReference type="EMBL" id="CP000802">
    <property type="protein sequence ID" value="ABV06927.1"/>
    <property type="molecule type" value="Genomic_DNA"/>
</dbReference>
<dbReference type="RefSeq" id="WP_000003325.1">
    <property type="nucleotide sequence ID" value="NC_009800.1"/>
</dbReference>
<dbReference type="SMR" id="A8A323"/>
<dbReference type="KEGG" id="ecx:EcHS_A2668"/>
<dbReference type="HOGENOM" id="CLU_029101_0_0_6"/>
<dbReference type="GO" id="GO:0005737">
    <property type="term" value="C:cytoplasm"/>
    <property type="evidence" value="ECO:0007669"/>
    <property type="project" value="UniProtKB-SubCell"/>
</dbReference>
<dbReference type="GO" id="GO:0051539">
    <property type="term" value="F:4 iron, 4 sulfur cluster binding"/>
    <property type="evidence" value="ECO:0007669"/>
    <property type="project" value="UniProtKB-UniRule"/>
</dbReference>
<dbReference type="GO" id="GO:0046872">
    <property type="term" value="F:metal ion binding"/>
    <property type="evidence" value="ECO:0007669"/>
    <property type="project" value="UniProtKB-KW"/>
</dbReference>
<dbReference type="GO" id="GO:0070040">
    <property type="term" value="F:rRNA (adenine(2503)-C2-)-methyltransferase activity"/>
    <property type="evidence" value="ECO:0007669"/>
    <property type="project" value="UniProtKB-UniRule"/>
</dbReference>
<dbReference type="GO" id="GO:0019843">
    <property type="term" value="F:rRNA binding"/>
    <property type="evidence" value="ECO:0007669"/>
    <property type="project" value="UniProtKB-UniRule"/>
</dbReference>
<dbReference type="GO" id="GO:0002935">
    <property type="term" value="F:tRNA (adenine(37)-C2)-methyltransferase activity"/>
    <property type="evidence" value="ECO:0007669"/>
    <property type="project" value="UniProtKB-UniRule"/>
</dbReference>
<dbReference type="GO" id="GO:0000049">
    <property type="term" value="F:tRNA binding"/>
    <property type="evidence" value="ECO:0007669"/>
    <property type="project" value="UniProtKB-UniRule"/>
</dbReference>
<dbReference type="GO" id="GO:0070475">
    <property type="term" value="P:rRNA base methylation"/>
    <property type="evidence" value="ECO:0007669"/>
    <property type="project" value="UniProtKB-UniRule"/>
</dbReference>
<dbReference type="GO" id="GO:0030488">
    <property type="term" value="P:tRNA methylation"/>
    <property type="evidence" value="ECO:0007669"/>
    <property type="project" value="UniProtKB-UniRule"/>
</dbReference>
<dbReference type="CDD" id="cd01335">
    <property type="entry name" value="Radical_SAM"/>
    <property type="match status" value="1"/>
</dbReference>
<dbReference type="FunFam" id="1.10.150.530:FF:000001">
    <property type="entry name" value="Dual-specificity RNA methyltransferase RlmN"/>
    <property type="match status" value="1"/>
</dbReference>
<dbReference type="FunFam" id="3.20.20.70:FF:000008">
    <property type="entry name" value="Dual-specificity RNA methyltransferase RlmN"/>
    <property type="match status" value="1"/>
</dbReference>
<dbReference type="Gene3D" id="1.10.150.530">
    <property type="match status" value="1"/>
</dbReference>
<dbReference type="Gene3D" id="3.20.20.70">
    <property type="entry name" value="Aldolase class I"/>
    <property type="match status" value="1"/>
</dbReference>
<dbReference type="HAMAP" id="MF_01849">
    <property type="entry name" value="RNA_methyltr_RlmN"/>
    <property type="match status" value="1"/>
</dbReference>
<dbReference type="InterPro" id="IPR013785">
    <property type="entry name" value="Aldolase_TIM"/>
</dbReference>
<dbReference type="InterPro" id="IPR040072">
    <property type="entry name" value="Methyltransferase_A"/>
</dbReference>
<dbReference type="InterPro" id="IPR048641">
    <property type="entry name" value="RlmN_N"/>
</dbReference>
<dbReference type="InterPro" id="IPR027492">
    <property type="entry name" value="RNA_MTrfase_RlmN"/>
</dbReference>
<dbReference type="InterPro" id="IPR004383">
    <property type="entry name" value="rRNA_lsu_MTrfase_RlmN/Cfr"/>
</dbReference>
<dbReference type="InterPro" id="IPR007197">
    <property type="entry name" value="rSAM"/>
</dbReference>
<dbReference type="NCBIfam" id="NF008396">
    <property type="entry name" value="PRK11194.1"/>
    <property type="match status" value="1"/>
</dbReference>
<dbReference type="NCBIfam" id="TIGR00048">
    <property type="entry name" value="rRNA_mod_RlmN"/>
    <property type="match status" value="1"/>
</dbReference>
<dbReference type="PANTHER" id="PTHR30544">
    <property type="entry name" value="23S RRNA METHYLTRANSFERASE"/>
    <property type="match status" value="1"/>
</dbReference>
<dbReference type="PANTHER" id="PTHR30544:SF5">
    <property type="entry name" value="RADICAL SAM CORE DOMAIN-CONTAINING PROTEIN"/>
    <property type="match status" value="1"/>
</dbReference>
<dbReference type="Pfam" id="PF04055">
    <property type="entry name" value="Radical_SAM"/>
    <property type="match status" value="1"/>
</dbReference>
<dbReference type="Pfam" id="PF21016">
    <property type="entry name" value="RlmN_N"/>
    <property type="match status" value="1"/>
</dbReference>
<dbReference type="PIRSF" id="PIRSF006004">
    <property type="entry name" value="CHP00048"/>
    <property type="match status" value="1"/>
</dbReference>
<dbReference type="SFLD" id="SFLDF00275">
    <property type="entry name" value="adenosine_C2_methyltransferase"/>
    <property type="match status" value="1"/>
</dbReference>
<dbReference type="SFLD" id="SFLDS00029">
    <property type="entry name" value="Radical_SAM"/>
    <property type="match status" value="1"/>
</dbReference>
<dbReference type="SUPFAM" id="SSF102114">
    <property type="entry name" value="Radical SAM enzymes"/>
    <property type="match status" value="1"/>
</dbReference>
<dbReference type="PROSITE" id="PS51918">
    <property type="entry name" value="RADICAL_SAM"/>
    <property type="match status" value="1"/>
</dbReference>
<proteinExistence type="inferred from homology"/>
<feature type="chain" id="PRO_0000350173" description="Dual-specificity RNA methyltransferase RlmN">
    <location>
        <begin position="1"/>
        <end position="384"/>
    </location>
</feature>
<feature type="domain" description="Radical SAM core" evidence="2">
    <location>
        <begin position="111"/>
        <end position="350"/>
    </location>
</feature>
<feature type="active site" description="Proton acceptor" evidence="1">
    <location>
        <position position="105"/>
    </location>
</feature>
<feature type="active site" description="S-methylcysteine intermediate" evidence="1">
    <location>
        <position position="355"/>
    </location>
</feature>
<feature type="binding site" evidence="1">
    <location>
        <position position="125"/>
    </location>
    <ligand>
        <name>[4Fe-4S] cluster</name>
        <dbReference type="ChEBI" id="CHEBI:49883"/>
        <note>4Fe-4S-S-AdoMet</note>
    </ligand>
</feature>
<feature type="binding site" evidence="1">
    <location>
        <position position="129"/>
    </location>
    <ligand>
        <name>[4Fe-4S] cluster</name>
        <dbReference type="ChEBI" id="CHEBI:49883"/>
        <note>4Fe-4S-S-AdoMet</note>
    </ligand>
</feature>
<feature type="binding site" evidence="1">
    <location>
        <position position="132"/>
    </location>
    <ligand>
        <name>[4Fe-4S] cluster</name>
        <dbReference type="ChEBI" id="CHEBI:49883"/>
        <note>4Fe-4S-S-AdoMet</note>
    </ligand>
</feature>
<feature type="binding site" evidence="1">
    <location>
        <begin position="179"/>
        <end position="180"/>
    </location>
    <ligand>
        <name>S-adenosyl-L-methionine</name>
        <dbReference type="ChEBI" id="CHEBI:59789"/>
    </ligand>
</feature>
<feature type="binding site" evidence="1">
    <location>
        <position position="211"/>
    </location>
    <ligand>
        <name>S-adenosyl-L-methionine</name>
        <dbReference type="ChEBI" id="CHEBI:59789"/>
    </ligand>
</feature>
<feature type="binding site" evidence="1">
    <location>
        <begin position="233"/>
        <end position="235"/>
    </location>
    <ligand>
        <name>S-adenosyl-L-methionine</name>
        <dbReference type="ChEBI" id="CHEBI:59789"/>
    </ligand>
</feature>
<feature type="binding site" evidence="1">
    <location>
        <position position="312"/>
    </location>
    <ligand>
        <name>S-adenosyl-L-methionine</name>
        <dbReference type="ChEBI" id="CHEBI:59789"/>
    </ligand>
</feature>
<feature type="disulfide bond" description="(transient)" evidence="1">
    <location>
        <begin position="118"/>
        <end position="355"/>
    </location>
</feature>
<organism>
    <name type="scientific">Escherichia coli O9:H4 (strain HS)</name>
    <dbReference type="NCBI Taxonomy" id="331112"/>
    <lineage>
        <taxon>Bacteria</taxon>
        <taxon>Pseudomonadati</taxon>
        <taxon>Pseudomonadota</taxon>
        <taxon>Gammaproteobacteria</taxon>
        <taxon>Enterobacterales</taxon>
        <taxon>Enterobacteriaceae</taxon>
        <taxon>Escherichia</taxon>
    </lineage>
</organism>
<accession>A8A323</accession>
<keyword id="KW-0004">4Fe-4S</keyword>
<keyword id="KW-0963">Cytoplasm</keyword>
<keyword id="KW-1015">Disulfide bond</keyword>
<keyword id="KW-0408">Iron</keyword>
<keyword id="KW-0411">Iron-sulfur</keyword>
<keyword id="KW-0479">Metal-binding</keyword>
<keyword id="KW-0489">Methyltransferase</keyword>
<keyword id="KW-0698">rRNA processing</keyword>
<keyword id="KW-0949">S-adenosyl-L-methionine</keyword>
<keyword id="KW-0808">Transferase</keyword>
<keyword id="KW-0819">tRNA processing</keyword>
<evidence type="ECO:0000255" key="1">
    <source>
        <dbReference type="HAMAP-Rule" id="MF_01849"/>
    </source>
</evidence>
<evidence type="ECO:0000255" key="2">
    <source>
        <dbReference type="PROSITE-ProRule" id="PRU01266"/>
    </source>
</evidence>
<sequence length="384" mass="43070">MSEQLVTPENVTTKDGKINLLDLNRQQMREFFKDLGEKPFRADQVMKWMYHYCCDNFDEMTDINKVLRGKLKEVAEIRAPEVVEEQRSSDGTIKWAIAVGDQRVETVYIPEVDRATLCVSSQVGCALECKFCSTAQQGFNRNLRVSEIIGQVWRAAKIVGAAKVTGQRPITNVVMMGMGEPLLNLNNVVPAMEIMLDDFGFGLSKRRVTLSTSGVVPALDKLGDMIDVALAISLHAPNDEIRDEIVPINKKYNIETFLAAVRRYLEKSNANQGRVTIEYVMLDHVNDGTEHAHQLAELLKDTPCKINLIPWNPFPGAPYGRSSNSRIDRFSKVLMSYGFTTIVRKTRGDDIDAACGQLAGDVIDRTKRTLRKRMQGEAIDIKAV</sequence>
<name>RLMN_ECOHS</name>
<gene>
    <name evidence="1" type="primary">rlmN</name>
    <name type="ordered locus">EcHS_A2668</name>
</gene>